<gene>
    <name evidence="1" type="primary">atpB</name>
    <name type="ordered locus">MmarC5_0548</name>
</gene>
<proteinExistence type="inferred from homology"/>
<evidence type="ECO:0000255" key="1">
    <source>
        <dbReference type="HAMAP-Rule" id="MF_00310"/>
    </source>
</evidence>
<sequence length="462" mass="50644">MDAMQKTIEYTSVSRIAGPLMVIDGIEGIAYGEIVDITTPNGDKRTGQVLEAREEIAVVQVFEGTSELNTSETKVRFTGDTAKIGVSHDMLGRIFNGAGKPLDGGPEIIAEKKLDINGYPLNPVSRNPPNAFVQTGVSTIDGTNTLVRGQKIPIFSGSGLPHNKLATQIARQAKVRGEGEQFAVVFAAMGITGEESNYFMDEFKKTGALEKAVVFINLADDPAIERILTPRIALTTAEYLAYEKGMHVLVILTDLTNYCEALREIAAARNEVPGRRGYPGYMYTDLACLYERAGRVKGKEGTVTQIPILTMPDDDITHPIPDLTGYITEGQIVLSRELNRKGIYPPVDILPSLSRLAGNGQGEGKTRDDHSKVISQAYAAYAEGRGLRDLVAVVGEEALTERDRSFLKFADAFENSIVTQGVDEDRSIEETLDYIWGLLTILPREELKRVSDELIEKYLPKK</sequence>
<accession>A4FXD3</accession>
<comment type="function">
    <text evidence="1">Component of the A-type ATP synthase that produces ATP from ADP in the presence of a proton gradient across the membrane. The B chain is a regulatory subunit.</text>
</comment>
<comment type="subunit">
    <text evidence="1">Has multiple subunits with at least A(3), B(3), C, D, E, F, H, I and proteolipid K(x).</text>
</comment>
<comment type="subcellular location">
    <subcellularLocation>
        <location evidence="1">Cell membrane</location>
        <topology evidence="1">Peripheral membrane protein</topology>
    </subcellularLocation>
</comment>
<comment type="similarity">
    <text evidence="1">Belongs to the ATPase alpha/beta chains family.</text>
</comment>
<feature type="chain" id="PRO_1000059378" description="A-type ATP synthase subunit B">
    <location>
        <begin position="1"/>
        <end position="462"/>
    </location>
</feature>
<organism>
    <name type="scientific">Methanococcus maripaludis (strain C5 / ATCC BAA-1333)</name>
    <dbReference type="NCBI Taxonomy" id="402880"/>
    <lineage>
        <taxon>Archaea</taxon>
        <taxon>Methanobacteriati</taxon>
        <taxon>Methanobacteriota</taxon>
        <taxon>Methanomada group</taxon>
        <taxon>Methanococci</taxon>
        <taxon>Methanococcales</taxon>
        <taxon>Methanococcaceae</taxon>
        <taxon>Methanococcus</taxon>
    </lineage>
</organism>
<protein>
    <recommendedName>
        <fullName evidence="1">A-type ATP synthase subunit B</fullName>
    </recommendedName>
</protein>
<dbReference type="EMBL" id="CP000609">
    <property type="protein sequence ID" value="ABO34862.1"/>
    <property type="molecule type" value="Genomic_DNA"/>
</dbReference>
<dbReference type="RefSeq" id="WP_011868317.1">
    <property type="nucleotide sequence ID" value="NC_009135.1"/>
</dbReference>
<dbReference type="SMR" id="A4FXD3"/>
<dbReference type="STRING" id="402880.MmarC5_0548"/>
<dbReference type="GeneID" id="4928560"/>
<dbReference type="KEGG" id="mmq:MmarC5_0548"/>
<dbReference type="eggNOG" id="arCOG00865">
    <property type="taxonomic scope" value="Archaea"/>
</dbReference>
<dbReference type="HOGENOM" id="CLU_022916_0_0_2"/>
<dbReference type="OrthoDB" id="32941at2157"/>
<dbReference type="Proteomes" id="UP000000253">
    <property type="component" value="Chromosome"/>
</dbReference>
<dbReference type="GO" id="GO:0005886">
    <property type="term" value="C:plasma membrane"/>
    <property type="evidence" value="ECO:0007669"/>
    <property type="project" value="UniProtKB-SubCell"/>
</dbReference>
<dbReference type="GO" id="GO:0005524">
    <property type="term" value="F:ATP binding"/>
    <property type="evidence" value="ECO:0007669"/>
    <property type="project" value="UniProtKB-UniRule"/>
</dbReference>
<dbReference type="GO" id="GO:0046933">
    <property type="term" value="F:proton-transporting ATP synthase activity, rotational mechanism"/>
    <property type="evidence" value="ECO:0007669"/>
    <property type="project" value="UniProtKB-UniRule"/>
</dbReference>
<dbReference type="GO" id="GO:0042777">
    <property type="term" value="P:proton motive force-driven plasma membrane ATP synthesis"/>
    <property type="evidence" value="ECO:0007669"/>
    <property type="project" value="UniProtKB-UniRule"/>
</dbReference>
<dbReference type="CDD" id="cd18112">
    <property type="entry name" value="ATP-synt_V_A-type_beta_C"/>
    <property type="match status" value="1"/>
</dbReference>
<dbReference type="CDD" id="cd18118">
    <property type="entry name" value="ATP-synt_V_A-type_beta_N"/>
    <property type="match status" value="1"/>
</dbReference>
<dbReference type="CDD" id="cd01135">
    <property type="entry name" value="V_A-ATPase_B"/>
    <property type="match status" value="1"/>
</dbReference>
<dbReference type="Gene3D" id="3.40.50.12240">
    <property type="match status" value="1"/>
</dbReference>
<dbReference type="HAMAP" id="MF_00310">
    <property type="entry name" value="ATP_synth_B_arch"/>
    <property type="match status" value="1"/>
</dbReference>
<dbReference type="InterPro" id="IPR055190">
    <property type="entry name" value="ATP-synt_VA_C"/>
</dbReference>
<dbReference type="InterPro" id="IPR020003">
    <property type="entry name" value="ATPase_a/bsu_AS"/>
</dbReference>
<dbReference type="InterPro" id="IPR004100">
    <property type="entry name" value="ATPase_F1/V1/A1_a/bsu_N"/>
</dbReference>
<dbReference type="InterPro" id="IPR000194">
    <property type="entry name" value="ATPase_F1/V1/A1_a/bsu_nucl-bd"/>
</dbReference>
<dbReference type="InterPro" id="IPR027417">
    <property type="entry name" value="P-loop_NTPase"/>
</dbReference>
<dbReference type="InterPro" id="IPR022879">
    <property type="entry name" value="V-ATPase_su_B/beta"/>
</dbReference>
<dbReference type="NCBIfam" id="NF003235">
    <property type="entry name" value="PRK04196.1"/>
    <property type="match status" value="1"/>
</dbReference>
<dbReference type="PANTHER" id="PTHR43389">
    <property type="entry name" value="V-TYPE PROTON ATPASE SUBUNIT B"/>
    <property type="match status" value="1"/>
</dbReference>
<dbReference type="PANTHER" id="PTHR43389:SF4">
    <property type="entry name" value="V-TYPE PROTON ATPASE SUBUNIT B"/>
    <property type="match status" value="1"/>
</dbReference>
<dbReference type="Pfam" id="PF00006">
    <property type="entry name" value="ATP-synt_ab"/>
    <property type="match status" value="1"/>
</dbReference>
<dbReference type="Pfam" id="PF02874">
    <property type="entry name" value="ATP-synt_ab_N"/>
    <property type="match status" value="1"/>
</dbReference>
<dbReference type="Pfam" id="PF22919">
    <property type="entry name" value="ATP-synt_VA_C"/>
    <property type="match status" value="1"/>
</dbReference>
<dbReference type="PIRSF" id="PIRSF039114">
    <property type="entry name" value="V-ATPsynth_beta/V-ATPase_B"/>
    <property type="match status" value="1"/>
</dbReference>
<dbReference type="SUPFAM" id="SSF47917">
    <property type="entry name" value="C-terminal domain of alpha and beta subunits of F1 ATP synthase"/>
    <property type="match status" value="1"/>
</dbReference>
<dbReference type="SUPFAM" id="SSF52540">
    <property type="entry name" value="P-loop containing nucleoside triphosphate hydrolases"/>
    <property type="match status" value="1"/>
</dbReference>
<dbReference type="PROSITE" id="PS00152">
    <property type="entry name" value="ATPASE_ALPHA_BETA"/>
    <property type="match status" value="1"/>
</dbReference>
<name>AATB_METM5</name>
<keyword id="KW-0066">ATP synthesis</keyword>
<keyword id="KW-1003">Cell membrane</keyword>
<keyword id="KW-0375">Hydrogen ion transport</keyword>
<keyword id="KW-0406">Ion transport</keyword>
<keyword id="KW-0472">Membrane</keyword>
<keyword id="KW-0813">Transport</keyword>
<reference key="1">
    <citation type="submission" date="2007-03" db="EMBL/GenBank/DDBJ databases">
        <title>Complete sequence of chromosome of Methanococcus maripaludis C5.</title>
        <authorList>
            <consortium name="US DOE Joint Genome Institute"/>
            <person name="Copeland A."/>
            <person name="Lucas S."/>
            <person name="Lapidus A."/>
            <person name="Barry K."/>
            <person name="Glavina del Rio T."/>
            <person name="Dalin E."/>
            <person name="Tice H."/>
            <person name="Pitluck S."/>
            <person name="Chertkov O."/>
            <person name="Brettin T."/>
            <person name="Bruce D."/>
            <person name="Han C."/>
            <person name="Detter J.C."/>
            <person name="Schmutz J."/>
            <person name="Larimer F."/>
            <person name="Land M."/>
            <person name="Hauser L."/>
            <person name="Kyrpides N."/>
            <person name="Mikhailova N."/>
            <person name="Sieprawska-Lupa M."/>
            <person name="Whitman W.B."/>
            <person name="Richardson P."/>
        </authorList>
    </citation>
    <scope>NUCLEOTIDE SEQUENCE [LARGE SCALE GENOMIC DNA]</scope>
    <source>
        <strain>C5 / ATCC BAA-1333</strain>
    </source>
</reference>